<proteinExistence type="inferred from homology"/>
<organism>
    <name type="scientific">Nocardia farcinica (strain IFM 10152)</name>
    <dbReference type="NCBI Taxonomy" id="247156"/>
    <lineage>
        <taxon>Bacteria</taxon>
        <taxon>Bacillati</taxon>
        <taxon>Actinomycetota</taxon>
        <taxon>Actinomycetes</taxon>
        <taxon>Mycobacteriales</taxon>
        <taxon>Nocardiaceae</taxon>
        <taxon>Nocardia</taxon>
    </lineage>
</organism>
<comment type="function">
    <text evidence="1">One of the primary rRNA binding proteins, this protein initially binds near the 5'-end of the 23S rRNA. It is important during the early stages of 50S assembly. It makes multiple contacts with different domains of the 23S rRNA in the assembled 50S subunit and ribosome.</text>
</comment>
<comment type="function">
    <text evidence="1">Forms part of the polypeptide exit tunnel.</text>
</comment>
<comment type="subunit">
    <text evidence="1">Part of the 50S ribosomal subunit.</text>
</comment>
<comment type="similarity">
    <text evidence="1">Belongs to the universal ribosomal protein uL4 family.</text>
</comment>
<keyword id="KW-1185">Reference proteome</keyword>
<keyword id="KW-0687">Ribonucleoprotein</keyword>
<keyword id="KW-0689">Ribosomal protein</keyword>
<keyword id="KW-0694">RNA-binding</keyword>
<keyword id="KW-0699">rRNA-binding</keyword>
<gene>
    <name evidence="1" type="primary">rplD</name>
    <name type="ordered locus">NFA_7340</name>
</gene>
<evidence type="ECO:0000255" key="1">
    <source>
        <dbReference type="HAMAP-Rule" id="MF_01328"/>
    </source>
</evidence>
<evidence type="ECO:0000256" key="2">
    <source>
        <dbReference type="SAM" id="MobiDB-lite"/>
    </source>
</evidence>
<evidence type="ECO:0000305" key="3"/>
<protein>
    <recommendedName>
        <fullName evidence="1">Large ribosomal subunit protein uL4</fullName>
    </recommendedName>
    <alternativeName>
        <fullName evidence="3">50S ribosomal protein L4</fullName>
    </alternativeName>
</protein>
<dbReference type="EMBL" id="AP006618">
    <property type="protein sequence ID" value="BAD55579.1"/>
    <property type="molecule type" value="Genomic_DNA"/>
</dbReference>
<dbReference type="RefSeq" id="WP_011207265.1">
    <property type="nucleotide sequence ID" value="NC_006361.1"/>
</dbReference>
<dbReference type="SMR" id="Q5Z1W2"/>
<dbReference type="STRING" id="247156.NFA_7340"/>
<dbReference type="GeneID" id="61131565"/>
<dbReference type="KEGG" id="nfa:NFA_7340"/>
<dbReference type="eggNOG" id="COG0088">
    <property type="taxonomic scope" value="Bacteria"/>
</dbReference>
<dbReference type="HOGENOM" id="CLU_041575_5_0_11"/>
<dbReference type="OrthoDB" id="9803201at2"/>
<dbReference type="Proteomes" id="UP000006820">
    <property type="component" value="Chromosome"/>
</dbReference>
<dbReference type="GO" id="GO:1990904">
    <property type="term" value="C:ribonucleoprotein complex"/>
    <property type="evidence" value="ECO:0007669"/>
    <property type="project" value="UniProtKB-KW"/>
</dbReference>
<dbReference type="GO" id="GO:0005840">
    <property type="term" value="C:ribosome"/>
    <property type="evidence" value="ECO:0007669"/>
    <property type="project" value="UniProtKB-KW"/>
</dbReference>
<dbReference type="GO" id="GO:0019843">
    <property type="term" value="F:rRNA binding"/>
    <property type="evidence" value="ECO:0007669"/>
    <property type="project" value="UniProtKB-UniRule"/>
</dbReference>
<dbReference type="GO" id="GO:0003735">
    <property type="term" value="F:structural constituent of ribosome"/>
    <property type="evidence" value="ECO:0007669"/>
    <property type="project" value="InterPro"/>
</dbReference>
<dbReference type="GO" id="GO:0006412">
    <property type="term" value="P:translation"/>
    <property type="evidence" value="ECO:0007669"/>
    <property type="project" value="UniProtKB-UniRule"/>
</dbReference>
<dbReference type="FunFam" id="3.40.1370.10:FF:000004">
    <property type="entry name" value="50S ribosomal protein L4"/>
    <property type="match status" value="1"/>
</dbReference>
<dbReference type="Gene3D" id="3.40.1370.10">
    <property type="match status" value="1"/>
</dbReference>
<dbReference type="HAMAP" id="MF_01328_B">
    <property type="entry name" value="Ribosomal_uL4_B"/>
    <property type="match status" value="1"/>
</dbReference>
<dbReference type="InterPro" id="IPR002136">
    <property type="entry name" value="Ribosomal_uL4"/>
</dbReference>
<dbReference type="InterPro" id="IPR013005">
    <property type="entry name" value="Ribosomal_uL4-like"/>
</dbReference>
<dbReference type="InterPro" id="IPR023574">
    <property type="entry name" value="Ribosomal_uL4_dom_sf"/>
</dbReference>
<dbReference type="NCBIfam" id="TIGR03953">
    <property type="entry name" value="rplD_bact"/>
    <property type="match status" value="1"/>
</dbReference>
<dbReference type="PANTHER" id="PTHR10746">
    <property type="entry name" value="50S RIBOSOMAL PROTEIN L4"/>
    <property type="match status" value="1"/>
</dbReference>
<dbReference type="PANTHER" id="PTHR10746:SF6">
    <property type="entry name" value="LARGE RIBOSOMAL SUBUNIT PROTEIN UL4M"/>
    <property type="match status" value="1"/>
</dbReference>
<dbReference type="Pfam" id="PF00573">
    <property type="entry name" value="Ribosomal_L4"/>
    <property type="match status" value="1"/>
</dbReference>
<dbReference type="SUPFAM" id="SSF52166">
    <property type="entry name" value="Ribosomal protein L4"/>
    <property type="match status" value="1"/>
</dbReference>
<reference key="1">
    <citation type="journal article" date="2004" name="Proc. Natl. Acad. Sci. U.S.A.">
        <title>The complete genomic sequence of Nocardia farcinica IFM 10152.</title>
        <authorList>
            <person name="Ishikawa J."/>
            <person name="Yamashita A."/>
            <person name="Mikami Y."/>
            <person name="Hoshino Y."/>
            <person name="Kurita H."/>
            <person name="Hotta K."/>
            <person name="Shiba T."/>
            <person name="Hattori M."/>
        </authorList>
    </citation>
    <scope>NUCLEOTIDE SEQUENCE [LARGE SCALE GENOMIC DNA]</scope>
    <source>
        <strain>IFM 10152</strain>
    </source>
</reference>
<accession>Q5Z1W2</accession>
<name>RL4_NOCFA</name>
<feature type="chain" id="PRO_0000242406" description="Large ribosomal subunit protein uL4">
    <location>
        <begin position="1"/>
        <end position="230"/>
    </location>
</feature>
<feature type="region of interest" description="Disordered" evidence="2">
    <location>
        <begin position="59"/>
        <end position="113"/>
    </location>
</feature>
<sequence length="230" mass="24664">MSAVSTQKDTEKKANLVLPVKEAGGKSNGTVELPAEIFDVTANIALMHQVVTAQLAAARQGTHATKTRGEVSGGGKKPYRQKGTGRARQGSTRAPQFTGGGTVHGPQPRDYSQRTPKKMIRAALHGALSDRARNDRIHVVSELVAGQTPSTKTAKNFLAELSDRKKFLVVVGREDVTAWKSVANLQNVQPIAPDQLNTYDVLNSDDVVFSVEALNAFVHGPTEAAQEESK</sequence>